<comment type="function">
    <text>Hemolymph antibacterial protein.</text>
</comment>
<comment type="subcellular location">
    <subcellularLocation>
        <location evidence="2">Secreted</location>
    </subcellularLocation>
</comment>
<comment type="tissue specificity">
    <text evidence="2">Hemolymph (at protein level).</text>
</comment>
<comment type="induction">
    <text evidence="2">By bacterial infection (at protein level).</text>
</comment>
<comment type="similarity">
    <text evidence="4">Belongs to the attacin/sarcotoxin-2 family.</text>
</comment>
<sequence length="218" mass="22583">MQKTSILILALFAIAEAVPTTGPIRVRRQVLGGSLASNPAGGADARLNLSKGIGNPNHNVVGQVFAAGNTQSGPVTTGGTLAYNNAGHGASLTKTHTPGVKDVFQQEAHANLFNNGRHNLDAKVFASQNKLANGFEFQRNGAGLDYSHINGHGASLTHSNFPGIGQQLGLDGRANLWSSPNRATTLDLTGSASKWTSGPFANQKPNFGAGLGLSHHFG</sequence>
<feature type="signal peptide" evidence="1">
    <location>
        <begin position="1"/>
        <end position="17"/>
    </location>
</feature>
<feature type="propeptide" id="PRO_0000004895" evidence="1">
    <location>
        <begin position="18"/>
        <end position="28"/>
    </location>
</feature>
<feature type="chain" id="PRO_0000004896" description="Attacin-B">
    <location>
        <begin position="29"/>
        <end position="218"/>
    </location>
</feature>
<feature type="sequence variant" description="In strain: 2CPA-7.">
    <original>A</original>
    <variation>D</variation>
    <location>
        <position position="108"/>
    </location>
</feature>
<feature type="sequence variant" description="In strain: 2CPA-122.">
    <original>Q</original>
    <variation>P</variation>
    <location>
        <position position="138"/>
    </location>
</feature>
<feature type="sequence conflict" description="In Ref. 3; AAF58214." evidence="4" ref="3">
    <original>A</original>
    <variation>G</variation>
    <location>
        <position position="154"/>
    </location>
</feature>
<protein>
    <recommendedName>
        <fullName>Attacin-B</fullName>
    </recommendedName>
</protein>
<organism>
    <name type="scientific">Drosophila melanogaster</name>
    <name type="common">Fruit fly</name>
    <dbReference type="NCBI Taxonomy" id="7227"/>
    <lineage>
        <taxon>Eukaryota</taxon>
        <taxon>Metazoa</taxon>
        <taxon>Ecdysozoa</taxon>
        <taxon>Arthropoda</taxon>
        <taxon>Hexapoda</taxon>
        <taxon>Insecta</taxon>
        <taxon>Pterygota</taxon>
        <taxon>Neoptera</taxon>
        <taxon>Endopterygota</taxon>
        <taxon>Diptera</taxon>
        <taxon>Brachycera</taxon>
        <taxon>Muscomorpha</taxon>
        <taxon>Ephydroidea</taxon>
        <taxon>Drosophilidae</taxon>
        <taxon>Drosophila</taxon>
        <taxon>Sophophora</taxon>
    </lineage>
</organism>
<evidence type="ECO:0000255" key="1"/>
<evidence type="ECO:0000269" key="2">
    <source>
    </source>
</evidence>
<evidence type="ECO:0000303" key="3">
    <source>
    </source>
</evidence>
<evidence type="ECO:0000305" key="4"/>
<keyword id="KW-0044">Antibiotic</keyword>
<keyword id="KW-0929">Antimicrobial</keyword>
<keyword id="KW-0165">Cleavage on pair of basic residues</keyword>
<keyword id="KW-0391">Immunity</keyword>
<keyword id="KW-0399">Innate immunity</keyword>
<keyword id="KW-1185">Reference proteome</keyword>
<keyword id="KW-0964">Secreted</keyword>
<keyword id="KW-0732">Signal</keyword>
<reference key="1">
    <citation type="journal article" date="2000" name="Gene">
        <title>Two attacin antibacterial genes of Drosophila melanogaster.</title>
        <authorList>
            <person name="Dushay M.S."/>
            <person name="Roethele J.B."/>
            <person name="Chaverri J.M."/>
            <person name="Dulek D.E."/>
            <person name="Syed S.K."/>
            <person name="Kitami T."/>
            <person name="Eldon E.D."/>
        </authorList>
    </citation>
    <scope>NUCLEOTIDE SEQUENCE [GENOMIC DNA]</scope>
</reference>
<reference key="2">
    <citation type="journal article" date="2001" name="Genetics">
        <title>Evidence for recurrent paralogous gene conversion and exceptional allelic divergence in the attacin genes of Drosophila melanogaster.</title>
        <authorList>
            <person name="Lazzaro B.P."/>
            <person name="Clark A.G."/>
        </authorList>
    </citation>
    <scope>NUCLEOTIDE SEQUENCE [GENOMIC DNA]</scope>
    <scope>VARIANTS</scope>
    <source>
        <strain>2CPA-1</strain>
        <strain>2CPA-103</strain>
        <strain>2CPA-105</strain>
        <strain>2CPA-118</strain>
        <strain>2CPA-12</strain>
        <strain>2CPA-122</strain>
        <strain>2CPA-129</strain>
        <strain>2CPA-14</strain>
        <strain>2CPA-43</strain>
        <strain>2CPA-46</strain>
        <strain>2CPA-51</strain>
        <strain>2CPA-7</strain>
    </source>
</reference>
<reference key="3">
    <citation type="journal article" date="2000" name="Science">
        <title>The genome sequence of Drosophila melanogaster.</title>
        <authorList>
            <person name="Adams M.D."/>
            <person name="Celniker S.E."/>
            <person name="Holt R.A."/>
            <person name="Evans C.A."/>
            <person name="Gocayne J.D."/>
            <person name="Amanatides P.G."/>
            <person name="Scherer S.E."/>
            <person name="Li P.W."/>
            <person name="Hoskins R.A."/>
            <person name="Galle R.F."/>
            <person name="George R.A."/>
            <person name="Lewis S.E."/>
            <person name="Richards S."/>
            <person name="Ashburner M."/>
            <person name="Henderson S.N."/>
            <person name="Sutton G.G."/>
            <person name="Wortman J.R."/>
            <person name="Yandell M.D."/>
            <person name="Zhang Q."/>
            <person name="Chen L.X."/>
            <person name="Brandon R.C."/>
            <person name="Rogers Y.-H.C."/>
            <person name="Blazej R.G."/>
            <person name="Champe M."/>
            <person name="Pfeiffer B.D."/>
            <person name="Wan K.H."/>
            <person name="Doyle C."/>
            <person name="Baxter E.G."/>
            <person name="Helt G."/>
            <person name="Nelson C.R."/>
            <person name="Miklos G.L.G."/>
            <person name="Abril J.F."/>
            <person name="Agbayani A."/>
            <person name="An H.-J."/>
            <person name="Andrews-Pfannkoch C."/>
            <person name="Baldwin D."/>
            <person name="Ballew R.M."/>
            <person name="Basu A."/>
            <person name="Baxendale J."/>
            <person name="Bayraktaroglu L."/>
            <person name="Beasley E.M."/>
            <person name="Beeson K.Y."/>
            <person name="Benos P.V."/>
            <person name="Berman B.P."/>
            <person name="Bhandari D."/>
            <person name="Bolshakov S."/>
            <person name="Borkova D."/>
            <person name="Botchan M.R."/>
            <person name="Bouck J."/>
            <person name="Brokstein P."/>
            <person name="Brottier P."/>
            <person name="Burtis K.C."/>
            <person name="Busam D.A."/>
            <person name="Butler H."/>
            <person name="Cadieu E."/>
            <person name="Center A."/>
            <person name="Chandra I."/>
            <person name="Cherry J.M."/>
            <person name="Cawley S."/>
            <person name="Dahlke C."/>
            <person name="Davenport L.B."/>
            <person name="Davies P."/>
            <person name="de Pablos B."/>
            <person name="Delcher A."/>
            <person name="Deng Z."/>
            <person name="Mays A.D."/>
            <person name="Dew I."/>
            <person name="Dietz S.M."/>
            <person name="Dodson K."/>
            <person name="Doup L.E."/>
            <person name="Downes M."/>
            <person name="Dugan-Rocha S."/>
            <person name="Dunkov B.C."/>
            <person name="Dunn P."/>
            <person name="Durbin K.J."/>
            <person name="Evangelista C.C."/>
            <person name="Ferraz C."/>
            <person name="Ferriera S."/>
            <person name="Fleischmann W."/>
            <person name="Fosler C."/>
            <person name="Gabrielian A.E."/>
            <person name="Garg N.S."/>
            <person name="Gelbart W.M."/>
            <person name="Glasser K."/>
            <person name="Glodek A."/>
            <person name="Gong F."/>
            <person name="Gorrell J.H."/>
            <person name="Gu Z."/>
            <person name="Guan P."/>
            <person name="Harris M."/>
            <person name="Harris N.L."/>
            <person name="Harvey D.A."/>
            <person name="Heiman T.J."/>
            <person name="Hernandez J.R."/>
            <person name="Houck J."/>
            <person name="Hostin D."/>
            <person name="Houston K.A."/>
            <person name="Howland T.J."/>
            <person name="Wei M.-H."/>
            <person name="Ibegwam C."/>
            <person name="Jalali M."/>
            <person name="Kalush F."/>
            <person name="Karpen G.H."/>
            <person name="Ke Z."/>
            <person name="Kennison J.A."/>
            <person name="Ketchum K.A."/>
            <person name="Kimmel B.E."/>
            <person name="Kodira C.D."/>
            <person name="Kraft C.L."/>
            <person name="Kravitz S."/>
            <person name="Kulp D."/>
            <person name="Lai Z."/>
            <person name="Lasko P."/>
            <person name="Lei Y."/>
            <person name="Levitsky A.A."/>
            <person name="Li J.H."/>
            <person name="Li Z."/>
            <person name="Liang Y."/>
            <person name="Lin X."/>
            <person name="Liu X."/>
            <person name="Mattei B."/>
            <person name="McIntosh T.C."/>
            <person name="McLeod M.P."/>
            <person name="McPherson D."/>
            <person name="Merkulov G."/>
            <person name="Milshina N.V."/>
            <person name="Mobarry C."/>
            <person name="Morris J."/>
            <person name="Moshrefi A."/>
            <person name="Mount S.M."/>
            <person name="Moy M."/>
            <person name="Murphy B."/>
            <person name="Murphy L."/>
            <person name="Muzny D.M."/>
            <person name="Nelson D.L."/>
            <person name="Nelson D.R."/>
            <person name="Nelson K.A."/>
            <person name="Nixon K."/>
            <person name="Nusskern D.R."/>
            <person name="Pacleb J.M."/>
            <person name="Palazzolo M."/>
            <person name="Pittman G.S."/>
            <person name="Pan S."/>
            <person name="Pollard J."/>
            <person name="Puri V."/>
            <person name="Reese M.G."/>
            <person name="Reinert K."/>
            <person name="Remington K."/>
            <person name="Saunders R.D.C."/>
            <person name="Scheeler F."/>
            <person name="Shen H."/>
            <person name="Shue B.C."/>
            <person name="Siden-Kiamos I."/>
            <person name="Simpson M."/>
            <person name="Skupski M.P."/>
            <person name="Smith T.J."/>
            <person name="Spier E."/>
            <person name="Spradling A.C."/>
            <person name="Stapleton M."/>
            <person name="Strong R."/>
            <person name="Sun E."/>
            <person name="Svirskas R."/>
            <person name="Tector C."/>
            <person name="Turner R."/>
            <person name="Venter E."/>
            <person name="Wang A.H."/>
            <person name="Wang X."/>
            <person name="Wang Z.-Y."/>
            <person name="Wassarman D.A."/>
            <person name="Weinstock G.M."/>
            <person name="Weissenbach J."/>
            <person name="Williams S.M."/>
            <person name="Woodage T."/>
            <person name="Worley K.C."/>
            <person name="Wu D."/>
            <person name="Yang S."/>
            <person name="Yao Q.A."/>
            <person name="Ye J."/>
            <person name="Yeh R.-F."/>
            <person name="Zaveri J.S."/>
            <person name="Zhan M."/>
            <person name="Zhang G."/>
            <person name="Zhao Q."/>
            <person name="Zheng L."/>
            <person name="Zheng X.H."/>
            <person name="Zhong F.N."/>
            <person name="Zhong W."/>
            <person name="Zhou X."/>
            <person name="Zhu S.C."/>
            <person name="Zhu X."/>
            <person name="Smith H.O."/>
            <person name="Gibbs R.A."/>
            <person name="Myers E.W."/>
            <person name="Rubin G.M."/>
            <person name="Venter J.C."/>
        </authorList>
    </citation>
    <scope>NUCLEOTIDE SEQUENCE [LARGE SCALE GENOMIC DNA]</scope>
    <source>
        <strain>Berkeley</strain>
    </source>
</reference>
<reference key="4">
    <citation type="journal article" date="2002" name="Genome Biol.">
        <title>Annotation of the Drosophila melanogaster euchromatic genome: a systematic review.</title>
        <authorList>
            <person name="Misra S."/>
            <person name="Crosby M.A."/>
            <person name="Mungall C.J."/>
            <person name="Matthews B.B."/>
            <person name="Campbell K.S."/>
            <person name="Hradecky P."/>
            <person name="Huang Y."/>
            <person name="Kaminker J.S."/>
            <person name="Millburn G.H."/>
            <person name="Prochnik S.E."/>
            <person name="Smith C.D."/>
            <person name="Tupy J.L."/>
            <person name="Whitfield E.J."/>
            <person name="Bayraktaroglu L."/>
            <person name="Berman B.P."/>
            <person name="Bettencourt B.R."/>
            <person name="Celniker S.E."/>
            <person name="de Grey A.D.N.J."/>
            <person name="Drysdale R.A."/>
            <person name="Harris N.L."/>
            <person name="Richter J."/>
            <person name="Russo S."/>
            <person name="Schroeder A.J."/>
            <person name="Shu S.Q."/>
            <person name="Stapleton M."/>
            <person name="Yamada C."/>
            <person name="Ashburner M."/>
            <person name="Gelbart W.M."/>
            <person name="Rubin G.M."/>
            <person name="Lewis S.E."/>
        </authorList>
    </citation>
    <scope>GENOME REANNOTATION</scope>
    <source>
        <strain>Berkeley</strain>
    </source>
</reference>
<reference key="5">
    <citation type="journal article" date="2006" name="J. Insect Physiol.">
        <title>Identification of new immune induced molecules in the haemolymph of Drosophila melanogaster by 2D-nanoLC MS/MS.</title>
        <authorList>
            <person name="Verleyen P."/>
            <person name="Baggerman G."/>
            <person name="D'Hertog W."/>
            <person name="Vierstraete E."/>
            <person name="Husson S.J."/>
            <person name="Schoofs L."/>
        </authorList>
    </citation>
    <scope>SUBCELLULAR LOCATION</scope>
    <scope>TISSUE SPECIFICITY</scope>
    <scope>INDUCTION BY BACTERIA</scope>
    <scope>IDENTIFICATION BY MASS SPECTROMETRY</scope>
    <source>
        <tissue evidence="3">Hemolymph</tissue>
    </source>
</reference>
<accession>Q9V751</accession>
<accession>Q95NV4</accession>
<accession>Q95U95</accession>
<accession>Q95U96</accession>
<gene>
    <name type="primary">AttB</name>
    <name type="synonym">AttB1</name>
    <name type="ORF">CG18372</name>
</gene>
<name>ATTB_DROME</name>
<dbReference type="EMBL" id="AF220546">
    <property type="protein sequence ID" value="AAF71234.1"/>
    <property type="molecule type" value="Genomic_DNA"/>
</dbReference>
<dbReference type="EMBL" id="AY056867">
    <property type="protein sequence ID" value="AAL23652.1"/>
    <property type="molecule type" value="Genomic_DNA"/>
</dbReference>
<dbReference type="EMBL" id="AY056868">
    <property type="protein sequence ID" value="AAL23653.1"/>
    <property type="molecule type" value="Genomic_DNA"/>
</dbReference>
<dbReference type="EMBL" id="AY056869">
    <property type="protein sequence ID" value="AAL23654.1"/>
    <property type="molecule type" value="Genomic_DNA"/>
</dbReference>
<dbReference type="EMBL" id="AY056870">
    <property type="protein sequence ID" value="AAL23655.1"/>
    <property type="molecule type" value="Genomic_DNA"/>
</dbReference>
<dbReference type="EMBL" id="AY056871">
    <property type="protein sequence ID" value="AAL23656.1"/>
    <property type="molecule type" value="Genomic_DNA"/>
</dbReference>
<dbReference type="EMBL" id="AY056872">
    <property type="protein sequence ID" value="AAL23657.1"/>
    <property type="molecule type" value="Genomic_DNA"/>
</dbReference>
<dbReference type="EMBL" id="AY056873">
    <property type="protein sequence ID" value="AAL23658.1"/>
    <property type="molecule type" value="Genomic_DNA"/>
</dbReference>
<dbReference type="EMBL" id="AY056874">
    <property type="protein sequence ID" value="AAL23659.1"/>
    <property type="molecule type" value="Genomic_DNA"/>
</dbReference>
<dbReference type="EMBL" id="AY056875">
    <property type="protein sequence ID" value="AAL23660.1"/>
    <property type="molecule type" value="Genomic_DNA"/>
</dbReference>
<dbReference type="EMBL" id="AY056876">
    <property type="protein sequence ID" value="AAL23661.1"/>
    <property type="molecule type" value="Genomic_DNA"/>
</dbReference>
<dbReference type="EMBL" id="AY056877">
    <property type="protein sequence ID" value="AAL23662.1"/>
    <property type="molecule type" value="Genomic_DNA"/>
</dbReference>
<dbReference type="EMBL" id="AY056878">
    <property type="protein sequence ID" value="AAL23663.1"/>
    <property type="molecule type" value="Genomic_DNA"/>
</dbReference>
<dbReference type="EMBL" id="AE013599">
    <property type="protein sequence ID" value="AAF58214.1"/>
    <property type="molecule type" value="Genomic_DNA"/>
</dbReference>
<dbReference type="RefSeq" id="NP_001163152.1">
    <property type="nucleotide sequence ID" value="NM_001169681.2"/>
</dbReference>
<dbReference type="RefSeq" id="NP_523746.1">
    <property type="nucleotide sequence ID" value="NM_079022.3"/>
</dbReference>
<dbReference type="BioGRID" id="62383">
    <property type="interactions" value="3"/>
</dbReference>
<dbReference type="IntAct" id="Q9V751">
    <property type="interactions" value="5"/>
</dbReference>
<dbReference type="STRING" id="7227.FBpp0290164"/>
<dbReference type="PaxDb" id="7227-FBpp0086568"/>
<dbReference type="DNASU" id="36637"/>
<dbReference type="GeneID" id="36637"/>
<dbReference type="KEGG" id="dme:Dmel_CG18372"/>
<dbReference type="AGR" id="FB:FBgn0041581"/>
<dbReference type="CTD" id="36637"/>
<dbReference type="FlyBase" id="FBgn0041581">
    <property type="gene designation" value="AttB"/>
</dbReference>
<dbReference type="VEuPathDB" id="VectorBase:FBgn0012042"/>
<dbReference type="eggNOG" id="ENOG502SZ31">
    <property type="taxonomic scope" value="Eukaryota"/>
</dbReference>
<dbReference type="HOGENOM" id="CLU_108645_0_0_1"/>
<dbReference type="InParanoid" id="Q9V751"/>
<dbReference type="OrthoDB" id="7441167at2759"/>
<dbReference type="PhylomeDB" id="Q9V751"/>
<dbReference type="BioGRID-ORCS" id="36637">
    <property type="hits" value="0 hits in 1 CRISPR screen"/>
</dbReference>
<dbReference type="GenomeRNAi" id="36637"/>
<dbReference type="PRO" id="PR:Q9V751"/>
<dbReference type="Proteomes" id="UP000000803">
    <property type="component" value="Chromosome 2R"/>
</dbReference>
<dbReference type="ExpressionAtlas" id="Q9V751">
    <property type="expression patterns" value="baseline and differential"/>
</dbReference>
<dbReference type="GO" id="GO:0005576">
    <property type="term" value="C:extracellular region"/>
    <property type="evidence" value="ECO:0000304"/>
    <property type="project" value="UniProtKB"/>
</dbReference>
<dbReference type="GO" id="GO:0005615">
    <property type="term" value="C:extracellular space"/>
    <property type="evidence" value="ECO:0000314"/>
    <property type="project" value="FlyBase"/>
</dbReference>
<dbReference type="GO" id="GO:0019731">
    <property type="term" value="P:antibacterial humoral response"/>
    <property type="evidence" value="ECO:0000270"/>
    <property type="project" value="FlyBase"/>
</dbReference>
<dbReference type="GO" id="GO:0050830">
    <property type="term" value="P:defense response to Gram-positive bacterium"/>
    <property type="evidence" value="ECO:0000270"/>
    <property type="project" value="FlyBase"/>
</dbReference>
<dbReference type="GO" id="GO:0002213">
    <property type="term" value="P:defense response to insect"/>
    <property type="evidence" value="ECO:0000270"/>
    <property type="project" value="FlyBase"/>
</dbReference>
<dbReference type="GO" id="GO:0006959">
    <property type="term" value="P:humoral immune response"/>
    <property type="evidence" value="ECO:0000270"/>
    <property type="project" value="FlyBase"/>
</dbReference>
<dbReference type="GO" id="GO:0045087">
    <property type="term" value="P:innate immune response"/>
    <property type="evidence" value="ECO:0007669"/>
    <property type="project" value="UniProtKB-KW"/>
</dbReference>
<dbReference type="InterPro" id="IPR005521">
    <property type="entry name" value="Attacin_C"/>
</dbReference>
<dbReference type="InterPro" id="IPR005520">
    <property type="entry name" value="Attacin_N"/>
</dbReference>
<dbReference type="Pfam" id="PF03769">
    <property type="entry name" value="Attacin_C"/>
    <property type="match status" value="1"/>
</dbReference>
<dbReference type="Pfam" id="PF03768">
    <property type="entry name" value="Attacin_N"/>
    <property type="match status" value="1"/>
</dbReference>
<proteinExistence type="evidence at protein level"/>